<keyword id="KW-0694">RNA-binding</keyword>
<keyword id="KW-0804">Transcription</keyword>
<keyword id="KW-0889">Transcription antitermination</keyword>
<keyword id="KW-0805">Transcription regulation</keyword>
<protein>
    <recommendedName>
        <fullName evidence="1">Transcription antitermination protein NusB</fullName>
    </recommendedName>
    <alternativeName>
        <fullName evidence="1">Antitermination factor NusB</fullName>
    </alternativeName>
</protein>
<name>NUSB_BARHE</name>
<organism>
    <name type="scientific">Bartonella henselae (strain ATCC 49882 / DSM 28221 / CCUG 30454 / Houston 1)</name>
    <name type="common">Rochalimaea henselae</name>
    <dbReference type="NCBI Taxonomy" id="283166"/>
    <lineage>
        <taxon>Bacteria</taxon>
        <taxon>Pseudomonadati</taxon>
        <taxon>Pseudomonadota</taxon>
        <taxon>Alphaproteobacteria</taxon>
        <taxon>Hyphomicrobiales</taxon>
        <taxon>Bartonellaceae</taxon>
        <taxon>Bartonella</taxon>
    </lineage>
</organism>
<gene>
    <name evidence="1" type="primary">nusB</name>
    <name type="ordered locus">BH07590</name>
</gene>
<sequence length="158" mass="17738">MVDVEGKYSPRLANKRGAARLAAVQALYQMDIVGSGVMETAAEYEAYRLGKDIDGDQYLDADFQWFLAIITGVVKDQKQLDPMLNQQLSAEWSLSRLDSILRAILRAGLWELINRQDVPIAVVMSEYVDIAKAFFEGDEPKLVNAILDSMAKKIRLLK</sequence>
<evidence type="ECO:0000255" key="1">
    <source>
        <dbReference type="HAMAP-Rule" id="MF_00073"/>
    </source>
</evidence>
<feature type="chain" id="PRO_0000265486" description="Transcription antitermination protein NusB">
    <location>
        <begin position="1"/>
        <end position="158"/>
    </location>
</feature>
<dbReference type="EMBL" id="BX897699">
    <property type="protein sequence ID" value="CAF27560.1"/>
    <property type="molecule type" value="Genomic_DNA"/>
</dbReference>
<dbReference type="RefSeq" id="WP_011180661.1">
    <property type="nucleotide sequence ID" value="NZ_LRIJ02000001.1"/>
</dbReference>
<dbReference type="SMR" id="Q6G3K8"/>
<dbReference type="PaxDb" id="283166-BH07590"/>
<dbReference type="EnsemblBacteria" id="CAF27560">
    <property type="protein sequence ID" value="CAF27560"/>
    <property type="gene ID" value="BH07590"/>
</dbReference>
<dbReference type="GeneID" id="92985570"/>
<dbReference type="KEGG" id="bhe:BH07590"/>
<dbReference type="eggNOG" id="COG0781">
    <property type="taxonomic scope" value="Bacteria"/>
</dbReference>
<dbReference type="OrthoDB" id="9797817at2"/>
<dbReference type="Proteomes" id="UP000000421">
    <property type="component" value="Chromosome"/>
</dbReference>
<dbReference type="GO" id="GO:0005829">
    <property type="term" value="C:cytosol"/>
    <property type="evidence" value="ECO:0007669"/>
    <property type="project" value="TreeGrafter"/>
</dbReference>
<dbReference type="GO" id="GO:0003723">
    <property type="term" value="F:RNA binding"/>
    <property type="evidence" value="ECO:0007669"/>
    <property type="project" value="UniProtKB-UniRule"/>
</dbReference>
<dbReference type="GO" id="GO:0006353">
    <property type="term" value="P:DNA-templated transcription termination"/>
    <property type="evidence" value="ECO:0007669"/>
    <property type="project" value="UniProtKB-UniRule"/>
</dbReference>
<dbReference type="GO" id="GO:0031564">
    <property type="term" value="P:transcription antitermination"/>
    <property type="evidence" value="ECO:0007669"/>
    <property type="project" value="UniProtKB-KW"/>
</dbReference>
<dbReference type="Gene3D" id="1.10.940.10">
    <property type="entry name" value="NusB-like"/>
    <property type="match status" value="1"/>
</dbReference>
<dbReference type="HAMAP" id="MF_00073">
    <property type="entry name" value="NusB"/>
    <property type="match status" value="1"/>
</dbReference>
<dbReference type="InterPro" id="IPR035926">
    <property type="entry name" value="NusB-like_sf"/>
</dbReference>
<dbReference type="InterPro" id="IPR011605">
    <property type="entry name" value="NusB_fam"/>
</dbReference>
<dbReference type="InterPro" id="IPR006027">
    <property type="entry name" value="NusB_RsmB_TIM44"/>
</dbReference>
<dbReference type="NCBIfam" id="TIGR01951">
    <property type="entry name" value="nusB"/>
    <property type="match status" value="1"/>
</dbReference>
<dbReference type="PANTHER" id="PTHR11078:SF3">
    <property type="entry name" value="ANTITERMINATION NUSB DOMAIN-CONTAINING PROTEIN"/>
    <property type="match status" value="1"/>
</dbReference>
<dbReference type="PANTHER" id="PTHR11078">
    <property type="entry name" value="N UTILIZATION SUBSTANCE PROTEIN B-RELATED"/>
    <property type="match status" value="1"/>
</dbReference>
<dbReference type="Pfam" id="PF01029">
    <property type="entry name" value="NusB"/>
    <property type="match status" value="1"/>
</dbReference>
<dbReference type="SUPFAM" id="SSF48013">
    <property type="entry name" value="NusB-like"/>
    <property type="match status" value="1"/>
</dbReference>
<comment type="function">
    <text evidence="1">Involved in transcription antitermination. Required for transcription of ribosomal RNA (rRNA) genes. Binds specifically to the boxA antiterminator sequence of the ribosomal RNA (rrn) operons.</text>
</comment>
<comment type="similarity">
    <text evidence="1">Belongs to the NusB family.</text>
</comment>
<proteinExistence type="inferred from homology"/>
<reference key="1">
    <citation type="journal article" date="2004" name="Proc. Natl. Acad. Sci. U.S.A.">
        <title>The louse-borne human pathogen Bartonella quintana is a genomic derivative of the zoonotic agent Bartonella henselae.</title>
        <authorList>
            <person name="Alsmark U.C.M."/>
            <person name="Frank A.C."/>
            <person name="Karlberg E.O."/>
            <person name="Legault B.-A."/>
            <person name="Ardell D.H."/>
            <person name="Canbaeck B."/>
            <person name="Eriksson A.-S."/>
            <person name="Naeslund A.K."/>
            <person name="Handley S.A."/>
            <person name="Huvet M."/>
            <person name="La Scola B."/>
            <person name="Holmberg M."/>
            <person name="Andersson S.G.E."/>
        </authorList>
    </citation>
    <scope>NUCLEOTIDE SEQUENCE [LARGE SCALE GENOMIC DNA]</scope>
    <source>
        <strain>ATCC 49882 / DSM 28221 / CCUG 30454 / Houston 1</strain>
    </source>
</reference>
<accession>Q6G3K8</accession>